<keyword id="KW-0175">Coiled coil</keyword>
<keyword id="KW-0238">DNA-binding</keyword>
<keyword id="KW-1185">Reference proteome</keyword>
<keyword id="KW-0804">Transcription</keyword>
<keyword id="KW-0805">Transcription regulation</keyword>
<accession>P64280</accession>
<accession>A0A1R3XXA3</accession>
<accession>O53428</accession>
<accession>X2BH00</accession>
<reference key="1">
    <citation type="journal article" date="2003" name="Proc. Natl. Acad. Sci. U.S.A.">
        <title>The complete genome sequence of Mycobacterium bovis.</title>
        <authorList>
            <person name="Garnier T."/>
            <person name="Eiglmeier K."/>
            <person name="Camus J.-C."/>
            <person name="Medina N."/>
            <person name="Mansoor H."/>
            <person name="Pryor M."/>
            <person name="Duthoy S."/>
            <person name="Grondin S."/>
            <person name="Lacroix C."/>
            <person name="Monsempe C."/>
            <person name="Simon S."/>
            <person name="Harris B."/>
            <person name="Atkin R."/>
            <person name="Doggett J."/>
            <person name="Mayes R."/>
            <person name="Keating L."/>
            <person name="Wheeler P.R."/>
            <person name="Parkhill J."/>
            <person name="Barrell B.G."/>
            <person name="Cole S.T."/>
            <person name="Gordon S.V."/>
            <person name="Hewinson R.G."/>
        </authorList>
    </citation>
    <scope>NUCLEOTIDE SEQUENCE [LARGE SCALE GENOMIC DNA]</scope>
    <source>
        <strain>ATCC BAA-935 / AF2122/97</strain>
    </source>
</reference>
<reference key="2">
    <citation type="journal article" date="2017" name="Genome Announc.">
        <title>Updated reference genome sequence and annotation of Mycobacterium bovis AF2122/97.</title>
        <authorList>
            <person name="Malone K.M."/>
            <person name="Farrell D."/>
            <person name="Stuber T.P."/>
            <person name="Schubert O.T."/>
            <person name="Aebersold R."/>
            <person name="Robbe-Austerman S."/>
            <person name="Gordon S.V."/>
        </authorList>
    </citation>
    <scope>NUCLEOTIDE SEQUENCE [LARGE SCALE GENOMIC DNA]</scope>
    <scope>GENOME REANNOTATION</scope>
    <source>
        <strain>ATCC BAA-935 / AF2122/97</strain>
    </source>
</reference>
<dbReference type="EMBL" id="LT708304">
    <property type="protein sequence ID" value="SIT99708.1"/>
    <property type="molecule type" value="Genomic_DNA"/>
</dbReference>
<dbReference type="RefSeq" id="NP_854764.1">
    <property type="nucleotide sequence ID" value="NC_002945.3"/>
</dbReference>
<dbReference type="RefSeq" id="WP_003405742.1">
    <property type="nucleotide sequence ID" value="NC_002945.4"/>
</dbReference>
<dbReference type="SMR" id="P64280"/>
<dbReference type="GeneID" id="45425053"/>
<dbReference type="KEGG" id="mbo:BQ2027_MB1109C"/>
<dbReference type="PATRIC" id="fig|233413.5.peg.1210"/>
<dbReference type="Proteomes" id="UP000001419">
    <property type="component" value="Chromosome"/>
</dbReference>
<dbReference type="GO" id="GO:0003677">
    <property type="term" value="F:DNA binding"/>
    <property type="evidence" value="ECO:0007669"/>
    <property type="project" value="UniProtKB-UniRule"/>
</dbReference>
<dbReference type="GO" id="GO:0070063">
    <property type="term" value="F:RNA polymerase binding"/>
    <property type="evidence" value="ECO:0007669"/>
    <property type="project" value="InterPro"/>
</dbReference>
<dbReference type="GO" id="GO:0006354">
    <property type="term" value="P:DNA-templated transcription elongation"/>
    <property type="evidence" value="ECO:0007669"/>
    <property type="project" value="TreeGrafter"/>
</dbReference>
<dbReference type="GO" id="GO:0032784">
    <property type="term" value="P:regulation of DNA-templated transcription elongation"/>
    <property type="evidence" value="ECO:0007669"/>
    <property type="project" value="UniProtKB-UniRule"/>
</dbReference>
<dbReference type="FunFam" id="1.10.287.180:FF:000001">
    <property type="entry name" value="Transcription elongation factor GreA"/>
    <property type="match status" value="1"/>
</dbReference>
<dbReference type="FunFam" id="3.10.50.30:FF:000003">
    <property type="entry name" value="Transcription elongation factor GreA"/>
    <property type="match status" value="1"/>
</dbReference>
<dbReference type="Gene3D" id="3.10.50.30">
    <property type="entry name" value="Transcription elongation factor, GreA/GreB, C-terminal domain"/>
    <property type="match status" value="1"/>
</dbReference>
<dbReference type="Gene3D" id="1.10.287.180">
    <property type="entry name" value="Transcription elongation factor, GreA/GreB, N-terminal domain"/>
    <property type="match status" value="1"/>
</dbReference>
<dbReference type="HAMAP" id="MF_00105">
    <property type="entry name" value="GreA_GreB"/>
    <property type="match status" value="1"/>
</dbReference>
<dbReference type="InterPro" id="IPR036953">
    <property type="entry name" value="GreA/GreB_C_sf"/>
</dbReference>
<dbReference type="InterPro" id="IPR018151">
    <property type="entry name" value="TF_GreA/GreB_CS"/>
</dbReference>
<dbReference type="InterPro" id="IPR006359">
    <property type="entry name" value="Tscrpt_elong_fac_GreA"/>
</dbReference>
<dbReference type="InterPro" id="IPR028624">
    <property type="entry name" value="Tscrpt_elong_fac_GreA/B"/>
</dbReference>
<dbReference type="InterPro" id="IPR001437">
    <property type="entry name" value="Tscrpt_elong_fac_GreA/B_C"/>
</dbReference>
<dbReference type="InterPro" id="IPR023459">
    <property type="entry name" value="Tscrpt_elong_fac_GreA/B_fam"/>
</dbReference>
<dbReference type="InterPro" id="IPR022691">
    <property type="entry name" value="Tscrpt_elong_fac_GreA/B_N"/>
</dbReference>
<dbReference type="InterPro" id="IPR036805">
    <property type="entry name" value="Tscrpt_elong_fac_GreA/B_N_sf"/>
</dbReference>
<dbReference type="NCBIfam" id="TIGR01462">
    <property type="entry name" value="greA"/>
    <property type="match status" value="1"/>
</dbReference>
<dbReference type="NCBIfam" id="NF001262">
    <property type="entry name" value="PRK00226.1-3"/>
    <property type="match status" value="1"/>
</dbReference>
<dbReference type="PANTHER" id="PTHR30437">
    <property type="entry name" value="TRANSCRIPTION ELONGATION FACTOR GREA"/>
    <property type="match status" value="1"/>
</dbReference>
<dbReference type="PANTHER" id="PTHR30437:SF4">
    <property type="entry name" value="TRANSCRIPTION ELONGATION FACTOR GREA"/>
    <property type="match status" value="1"/>
</dbReference>
<dbReference type="Pfam" id="PF01272">
    <property type="entry name" value="GreA_GreB"/>
    <property type="match status" value="1"/>
</dbReference>
<dbReference type="Pfam" id="PF03449">
    <property type="entry name" value="GreA_GreB_N"/>
    <property type="match status" value="1"/>
</dbReference>
<dbReference type="PIRSF" id="PIRSF006092">
    <property type="entry name" value="GreA_GreB"/>
    <property type="match status" value="1"/>
</dbReference>
<dbReference type="SUPFAM" id="SSF54534">
    <property type="entry name" value="FKBP-like"/>
    <property type="match status" value="1"/>
</dbReference>
<dbReference type="SUPFAM" id="SSF46557">
    <property type="entry name" value="GreA transcript cleavage protein, N-terminal domain"/>
    <property type="match status" value="1"/>
</dbReference>
<dbReference type="PROSITE" id="PS00829">
    <property type="entry name" value="GREAB_1"/>
    <property type="match status" value="1"/>
</dbReference>
<dbReference type="PROSITE" id="PS00830">
    <property type="entry name" value="GREAB_2"/>
    <property type="match status" value="1"/>
</dbReference>
<sequence length="164" mass="17855">MTDTQVTWLTQESHDRLKAELDQLIANRPVIAAEINDRREEGDLRENGGYHAAREEQGQQEARIRQLQDLLSNAKVGEAPKQSGVALPGSVVKVYYNGDKSDSETFLIATRQEGVSDGKLEVYSPNSPLGGALIDAKVGETRSYTVPNGSTVSVTLVSAEPYHS</sequence>
<feature type="chain" id="PRO_0000176944" description="Transcription elongation factor GreA">
    <location>
        <begin position="1"/>
        <end position="164"/>
    </location>
</feature>
<feature type="coiled-coil region" evidence="1">
    <location>
        <begin position="50"/>
        <end position="76"/>
    </location>
</feature>
<organism>
    <name type="scientific">Mycobacterium bovis (strain ATCC BAA-935 / AF2122/97)</name>
    <dbReference type="NCBI Taxonomy" id="233413"/>
    <lineage>
        <taxon>Bacteria</taxon>
        <taxon>Bacillati</taxon>
        <taxon>Actinomycetota</taxon>
        <taxon>Actinomycetes</taxon>
        <taxon>Mycobacteriales</taxon>
        <taxon>Mycobacteriaceae</taxon>
        <taxon>Mycobacterium</taxon>
        <taxon>Mycobacterium tuberculosis complex</taxon>
    </lineage>
</organism>
<protein>
    <recommendedName>
        <fullName evidence="1">Transcription elongation factor GreA</fullName>
    </recommendedName>
    <alternativeName>
        <fullName evidence="1">Transcript cleavage factor GreA</fullName>
    </alternativeName>
</protein>
<proteinExistence type="inferred from homology"/>
<name>GREA_MYCBO</name>
<evidence type="ECO:0000255" key="1">
    <source>
        <dbReference type="HAMAP-Rule" id="MF_00105"/>
    </source>
</evidence>
<comment type="function">
    <text evidence="1">Necessary for efficient RNA polymerase transcription elongation past template-encoded arresting sites. The arresting sites in DNA have the property of trapping a certain fraction of elongating RNA polymerases that pass through, resulting in locked ternary complexes. Cleavage of the nascent transcript by cleavage factors such as GreA or GreB allows the resumption of elongation from the new 3'terminus. GreA releases sequences of 2 to 3 nucleotides.</text>
</comment>
<comment type="similarity">
    <text evidence="1">Belongs to the GreA/GreB family.</text>
</comment>
<gene>
    <name evidence="1" type="primary">greA</name>
    <name type="ordered locus">BQ2027_MB1109C</name>
</gene>